<dbReference type="EMBL" id="CU928161">
    <property type="protein sequence ID" value="CAR02943.1"/>
    <property type="molecule type" value="Genomic_DNA"/>
</dbReference>
<dbReference type="RefSeq" id="WP_000705201.1">
    <property type="nucleotide sequence ID" value="NC_011742.1"/>
</dbReference>
<dbReference type="KEGG" id="ecz:ECS88_1628"/>
<dbReference type="HOGENOM" id="CLU_167574_0_0_6"/>
<dbReference type="Proteomes" id="UP000000747">
    <property type="component" value="Chromosome"/>
</dbReference>
<dbReference type="HAMAP" id="MF_01581">
    <property type="entry name" value="UPF0482"/>
    <property type="match status" value="1"/>
</dbReference>
<dbReference type="InterPro" id="IPR009700">
    <property type="entry name" value="DUF1283"/>
</dbReference>
<dbReference type="NCBIfam" id="NF010180">
    <property type="entry name" value="PRK13659.1"/>
    <property type="match status" value="1"/>
</dbReference>
<dbReference type="Pfam" id="PF06932">
    <property type="entry name" value="DUF1283"/>
    <property type="match status" value="1"/>
</dbReference>
<gene>
    <name evidence="1" type="primary">ynfB</name>
    <name type="ordered locus">ECS88_1628</name>
</gene>
<feature type="signal peptide" evidence="1">
    <location>
        <begin position="1"/>
        <end position="28"/>
    </location>
</feature>
<feature type="chain" id="PRO_1000201000" description="UPF0482 protein YnfB">
    <location>
        <begin position="29"/>
        <end position="113"/>
    </location>
</feature>
<comment type="similarity">
    <text evidence="1">Belongs to the UPF0482 family.</text>
</comment>
<reference key="1">
    <citation type="journal article" date="2009" name="PLoS Genet.">
        <title>Organised genome dynamics in the Escherichia coli species results in highly diverse adaptive paths.</title>
        <authorList>
            <person name="Touchon M."/>
            <person name="Hoede C."/>
            <person name="Tenaillon O."/>
            <person name="Barbe V."/>
            <person name="Baeriswyl S."/>
            <person name="Bidet P."/>
            <person name="Bingen E."/>
            <person name="Bonacorsi S."/>
            <person name="Bouchier C."/>
            <person name="Bouvet O."/>
            <person name="Calteau A."/>
            <person name="Chiapello H."/>
            <person name="Clermont O."/>
            <person name="Cruveiller S."/>
            <person name="Danchin A."/>
            <person name="Diard M."/>
            <person name="Dossat C."/>
            <person name="Karoui M.E."/>
            <person name="Frapy E."/>
            <person name="Garry L."/>
            <person name="Ghigo J.M."/>
            <person name="Gilles A.M."/>
            <person name="Johnson J."/>
            <person name="Le Bouguenec C."/>
            <person name="Lescat M."/>
            <person name="Mangenot S."/>
            <person name="Martinez-Jehanne V."/>
            <person name="Matic I."/>
            <person name="Nassif X."/>
            <person name="Oztas S."/>
            <person name="Petit M.A."/>
            <person name="Pichon C."/>
            <person name="Rouy Z."/>
            <person name="Ruf C.S."/>
            <person name="Schneider D."/>
            <person name="Tourret J."/>
            <person name="Vacherie B."/>
            <person name="Vallenet D."/>
            <person name="Medigue C."/>
            <person name="Rocha E.P.C."/>
            <person name="Denamur E."/>
        </authorList>
    </citation>
    <scope>NUCLEOTIDE SEQUENCE [LARGE SCALE GENOMIC DNA]</scope>
    <source>
        <strain>S88 / ExPEC</strain>
    </source>
</reference>
<sequence>MKITLSKRIGLLAFLLPCALALSTTVHAETNKLVIESGDSAQSRQRAAMEKEQWNDTRNLRQKVNKRTEKEWDKADAAFDNRDKCEQSANINAYWEPNTLRCLDRRTGRVIIP</sequence>
<accession>B7M9T6</accession>
<keyword id="KW-1185">Reference proteome</keyword>
<keyword id="KW-0732">Signal</keyword>
<protein>
    <recommendedName>
        <fullName evidence="1">UPF0482 protein YnfB</fullName>
    </recommendedName>
</protein>
<proteinExistence type="inferred from homology"/>
<evidence type="ECO:0000255" key="1">
    <source>
        <dbReference type="HAMAP-Rule" id="MF_01581"/>
    </source>
</evidence>
<name>YNFB_ECO45</name>
<organism>
    <name type="scientific">Escherichia coli O45:K1 (strain S88 / ExPEC)</name>
    <dbReference type="NCBI Taxonomy" id="585035"/>
    <lineage>
        <taxon>Bacteria</taxon>
        <taxon>Pseudomonadati</taxon>
        <taxon>Pseudomonadota</taxon>
        <taxon>Gammaproteobacteria</taxon>
        <taxon>Enterobacterales</taxon>
        <taxon>Enterobacteriaceae</taxon>
        <taxon>Escherichia</taxon>
    </lineage>
</organism>